<proteinExistence type="inferred from homology"/>
<dbReference type="EC" id="4.3.2.10" evidence="1"/>
<dbReference type="EMBL" id="CP000860">
    <property type="protein sequence ID" value="ACA60124.1"/>
    <property type="molecule type" value="Genomic_DNA"/>
</dbReference>
<dbReference type="RefSeq" id="WP_012302705.1">
    <property type="nucleotide sequence ID" value="NC_010424.1"/>
</dbReference>
<dbReference type="SMR" id="B1I556"/>
<dbReference type="STRING" id="477974.Daud_1622"/>
<dbReference type="KEGG" id="dau:Daud_1622"/>
<dbReference type="eggNOG" id="COG0107">
    <property type="taxonomic scope" value="Bacteria"/>
</dbReference>
<dbReference type="HOGENOM" id="CLU_048577_4_0_9"/>
<dbReference type="OrthoDB" id="9781903at2"/>
<dbReference type="UniPathway" id="UPA00031">
    <property type="reaction ID" value="UER00010"/>
</dbReference>
<dbReference type="Proteomes" id="UP000008544">
    <property type="component" value="Chromosome"/>
</dbReference>
<dbReference type="GO" id="GO:0005737">
    <property type="term" value="C:cytoplasm"/>
    <property type="evidence" value="ECO:0007669"/>
    <property type="project" value="UniProtKB-SubCell"/>
</dbReference>
<dbReference type="GO" id="GO:0000107">
    <property type="term" value="F:imidazoleglycerol-phosphate synthase activity"/>
    <property type="evidence" value="ECO:0007669"/>
    <property type="project" value="UniProtKB-UniRule"/>
</dbReference>
<dbReference type="GO" id="GO:0016829">
    <property type="term" value="F:lyase activity"/>
    <property type="evidence" value="ECO:0007669"/>
    <property type="project" value="UniProtKB-KW"/>
</dbReference>
<dbReference type="GO" id="GO:0000105">
    <property type="term" value="P:L-histidine biosynthetic process"/>
    <property type="evidence" value="ECO:0007669"/>
    <property type="project" value="UniProtKB-UniRule"/>
</dbReference>
<dbReference type="CDD" id="cd04731">
    <property type="entry name" value="HisF"/>
    <property type="match status" value="1"/>
</dbReference>
<dbReference type="FunFam" id="3.20.20.70:FF:000006">
    <property type="entry name" value="Imidazole glycerol phosphate synthase subunit HisF"/>
    <property type="match status" value="1"/>
</dbReference>
<dbReference type="Gene3D" id="3.20.20.70">
    <property type="entry name" value="Aldolase class I"/>
    <property type="match status" value="1"/>
</dbReference>
<dbReference type="HAMAP" id="MF_01013">
    <property type="entry name" value="HisF"/>
    <property type="match status" value="1"/>
</dbReference>
<dbReference type="InterPro" id="IPR013785">
    <property type="entry name" value="Aldolase_TIM"/>
</dbReference>
<dbReference type="InterPro" id="IPR006062">
    <property type="entry name" value="His_biosynth"/>
</dbReference>
<dbReference type="InterPro" id="IPR004651">
    <property type="entry name" value="HisF"/>
</dbReference>
<dbReference type="InterPro" id="IPR050064">
    <property type="entry name" value="IGPS_HisA/HisF"/>
</dbReference>
<dbReference type="InterPro" id="IPR011060">
    <property type="entry name" value="RibuloseP-bd_barrel"/>
</dbReference>
<dbReference type="NCBIfam" id="TIGR00735">
    <property type="entry name" value="hisF"/>
    <property type="match status" value="1"/>
</dbReference>
<dbReference type="PANTHER" id="PTHR21235:SF2">
    <property type="entry name" value="IMIDAZOLE GLYCEROL PHOSPHATE SYNTHASE HISHF"/>
    <property type="match status" value="1"/>
</dbReference>
<dbReference type="PANTHER" id="PTHR21235">
    <property type="entry name" value="IMIDAZOLE GLYCEROL PHOSPHATE SYNTHASE SUBUNIT HISF/H IGP SYNTHASE SUBUNIT HISF/H"/>
    <property type="match status" value="1"/>
</dbReference>
<dbReference type="Pfam" id="PF00977">
    <property type="entry name" value="His_biosynth"/>
    <property type="match status" value="1"/>
</dbReference>
<dbReference type="SUPFAM" id="SSF51366">
    <property type="entry name" value="Ribulose-phoshate binding barrel"/>
    <property type="match status" value="1"/>
</dbReference>
<feature type="chain" id="PRO_1000134988" description="Imidazole glycerol phosphate synthase subunit HisF">
    <location>
        <begin position="1"/>
        <end position="252"/>
    </location>
</feature>
<feature type="active site" evidence="1">
    <location>
        <position position="11"/>
    </location>
</feature>
<feature type="active site" evidence="1">
    <location>
        <position position="130"/>
    </location>
</feature>
<comment type="function">
    <text evidence="1">IGPS catalyzes the conversion of PRFAR and glutamine to IGP, AICAR and glutamate. The HisF subunit catalyzes the cyclization activity that produces IGP and AICAR from PRFAR using the ammonia provided by the HisH subunit.</text>
</comment>
<comment type="catalytic activity">
    <reaction evidence="1">
        <text>5-[(5-phospho-1-deoxy-D-ribulos-1-ylimino)methylamino]-1-(5-phospho-beta-D-ribosyl)imidazole-4-carboxamide + L-glutamine = D-erythro-1-(imidazol-4-yl)glycerol 3-phosphate + 5-amino-1-(5-phospho-beta-D-ribosyl)imidazole-4-carboxamide + L-glutamate + H(+)</text>
        <dbReference type="Rhea" id="RHEA:24793"/>
        <dbReference type="ChEBI" id="CHEBI:15378"/>
        <dbReference type="ChEBI" id="CHEBI:29985"/>
        <dbReference type="ChEBI" id="CHEBI:58278"/>
        <dbReference type="ChEBI" id="CHEBI:58359"/>
        <dbReference type="ChEBI" id="CHEBI:58475"/>
        <dbReference type="ChEBI" id="CHEBI:58525"/>
        <dbReference type="EC" id="4.3.2.10"/>
    </reaction>
</comment>
<comment type="pathway">
    <text evidence="1">Amino-acid biosynthesis; L-histidine biosynthesis; L-histidine from 5-phospho-alpha-D-ribose 1-diphosphate: step 5/9.</text>
</comment>
<comment type="subunit">
    <text evidence="1">Heterodimer of HisH and HisF.</text>
</comment>
<comment type="subcellular location">
    <subcellularLocation>
        <location evidence="1">Cytoplasm</location>
    </subcellularLocation>
</comment>
<comment type="similarity">
    <text evidence="1">Belongs to the HisA/HisF family.</text>
</comment>
<protein>
    <recommendedName>
        <fullName evidence="1">Imidazole glycerol phosphate synthase subunit HisF</fullName>
        <ecNumber evidence="1">4.3.2.10</ecNumber>
    </recommendedName>
    <alternativeName>
        <fullName evidence="1">IGP synthase cyclase subunit</fullName>
    </alternativeName>
    <alternativeName>
        <fullName evidence="1">IGP synthase subunit HisF</fullName>
    </alternativeName>
    <alternativeName>
        <fullName evidence="1">ImGP synthase subunit HisF</fullName>
        <shortName evidence="1">IGPS subunit HisF</shortName>
    </alternativeName>
</protein>
<organism>
    <name type="scientific">Desulforudis audaxviator (strain MP104C)</name>
    <dbReference type="NCBI Taxonomy" id="477974"/>
    <lineage>
        <taxon>Bacteria</taxon>
        <taxon>Bacillati</taxon>
        <taxon>Bacillota</taxon>
        <taxon>Clostridia</taxon>
        <taxon>Thermoanaerobacterales</taxon>
        <taxon>Candidatus Desulforudaceae</taxon>
        <taxon>Candidatus Desulforudis</taxon>
    </lineage>
</organism>
<keyword id="KW-0028">Amino-acid biosynthesis</keyword>
<keyword id="KW-0963">Cytoplasm</keyword>
<keyword id="KW-0368">Histidine biosynthesis</keyword>
<keyword id="KW-0456">Lyase</keyword>
<keyword id="KW-1185">Reference proteome</keyword>
<gene>
    <name evidence="1" type="primary">hisF</name>
    <name type="ordered locus">Daud_1622</name>
</gene>
<accession>B1I556</accession>
<sequence length="252" mass="26702">MLAKRIIPCLDVNRGRVVKGVNFVNLRDAGDPVELAAVYDREGADEVVFLDITASAEGRDIVLDMVRRTAEQVFIPFAVGGGIRTVEDIRAILKAGADKVSINTAAVKNPGLIAEAAEKFGTQCIVAAIDAKQTGSGKWEVYIHGGRTPTGLDAVEWARRVESLGAGEILLTSMDRDGTKDGYDLLLTRAVADAVRIPVIASGGVGTLEHIAEGLTEGGADAALAASIFHFGEYSIREVKEYLAARGIAVRL</sequence>
<evidence type="ECO:0000255" key="1">
    <source>
        <dbReference type="HAMAP-Rule" id="MF_01013"/>
    </source>
</evidence>
<reference key="1">
    <citation type="submission" date="2007-10" db="EMBL/GenBank/DDBJ databases">
        <title>Complete sequence of chromosome of Desulforudis audaxviator MP104C.</title>
        <authorList>
            <person name="Copeland A."/>
            <person name="Lucas S."/>
            <person name="Lapidus A."/>
            <person name="Barry K."/>
            <person name="Glavina del Rio T."/>
            <person name="Dalin E."/>
            <person name="Tice H."/>
            <person name="Bruce D."/>
            <person name="Pitluck S."/>
            <person name="Lowry S.R."/>
            <person name="Larimer F."/>
            <person name="Land M.L."/>
            <person name="Hauser L."/>
            <person name="Kyrpides N."/>
            <person name="Ivanova N.N."/>
            <person name="Richardson P."/>
        </authorList>
    </citation>
    <scope>NUCLEOTIDE SEQUENCE [LARGE SCALE GENOMIC DNA]</scope>
    <source>
        <strain>MP104C</strain>
    </source>
</reference>
<name>HIS6_DESAP</name>